<gene>
    <name evidence="1" type="primary">hisF</name>
    <name type="ordered locus">Dalk_2581</name>
</gene>
<reference key="1">
    <citation type="journal article" date="2012" name="Environ. Microbiol.">
        <title>The genome sequence of Desulfatibacillum alkenivorans AK-01: a blueprint for anaerobic alkane oxidation.</title>
        <authorList>
            <person name="Callaghan A.V."/>
            <person name="Morris B.E."/>
            <person name="Pereira I.A."/>
            <person name="McInerney M.J."/>
            <person name="Austin R.N."/>
            <person name="Groves J.T."/>
            <person name="Kukor J.J."/>
            <person name="Suflita J.M."/>
            <person name="Young L.Y."/>
            <person name="Zylstra G.J."/>
            <person name="Wawrik B."/>
        </authorList>
    </citation>
    <scope>NUCLEOTIDE SEQUENCE [LARGE SCALE GENOMIC DNA]</scope>
    <source>
        <strain>AK-01</strain>
    </source>
</reference>
<accession>B8FFL4</accession>
<name>HIS6_DESAL</name>
<comment type="function">
    <text evidence="1">IGPS catalyzes the conversion of PRFAR and glutamine to IGP, AICAR and glutamate. The HisF subunit catalyzes the cyclization activity that produces IGP and AICAR from PRFAR using the ammonia provided by the HisH subunit.</text>
</comment>
<comment type="catalytic activity">
    <reaction evidence="1">
        <text>5-[(5-phospho-1-deoxy-D-ribulos-1-ylimino)methylamino]-1-(5-phospho-beta-D-ribosyl)imidazole-4-carboxamide + L-glutamine = D-erythro-1-(imidazol-4-yl)glycerol 3-phosphate + 5-amino-1-(5-phospho-beta-D-ribosyl)imidazole-4-carboxamide + L-glutamate + H(+)</text>
        <dbReference type="Rhea" id="RHEA:24793"/>
        <dbReference type="ChEBI" id="CHEBI:15378"/>
        <dbReference type="ChEBI" id="CHEBI:29985"/>
        <dbReference type="ChEBI" id="CHEBI:58278"/>
        <dbReference type="ChEBI" id="CHEBI:58359"/>
        <dbReference type="ChEBI" id="CHEBI:58475"/>
        <dbReference type="ChEBI" id="CHEBI:58525"/>
        <dbReference type="EC" id="4.3.2.10"/>
    </reaction>
</comment>
<comment type="pathway">
    <text evidence="1">Amino-acid biosynthesis; L-histidine biosynthesis; L-histidine from 5-phospho-alpha-D-ribose 1-diphosphate: step 5/9.</text>
</comment>
<comment type="subunit">
    <text evidence="1">Heterodimer of HisH and HisF.</text>
</comment>
<comment type="subcellular location">
    <subcellularLocation>
        <location evidence="1">Cytoplasm</location>
    </subcellularLocation>
</comment>
<comment type="similarity">
    <text evidence="1">Belongs to the HisA/HisF family.</text>
</comment>
<feature type="chain" id="PRO_1000134987" description="Imidazole glycerol phosphate synthase subunit HisF">
    <location>
        <begin position="1"/>
        <end position="260"/>
    </location>
</feature>
<feature type="active site" evidence="1">
    <location>
        <position position="11"/>
    </location>
</feature>
<feature type="active site" evidence="1">
    <location>
        <position position="130"/>
    </location>
</feature>
<keyword id="KW-0028">Amino-acid biosynthesis</keyword>
<keyword id="KW-0963">Cytoplasm</keyword>
<keyword id="KW-0368">Histidine biosynthesis</keyword>
<keyword id="KW-0456">Lyase</keyword>
<keyword id="KW-1185">Reference proteome</keyword>
<proteinExistence type="inferred from homology"/>
<dbReference type="EC" id="4.3.2.10" evidence="1"/>
<dbReference type="EMBL" id="CP001322">
    <property type="protein sequence ID" value="ACL04274.1"/>
    <property type="molecule type" value="Genomic_DNA"/>
</dbReference>
<dbReference type="RefSeq" id="WP_015947347.1">
    <property type="nucleotide sequence ID" value="NC_011768.1"/>
</dbReference>
<dbReference type="SMR" id="B8FFL4"/>
<dbReference type="KEGG" id="dal:Dalk_2581"/>
<dbReference type="eggNOG" id="COG0107">
    <property type="taxonomic scope" value="Bacteria"/>
</dbReference>
<dbReference type="HOGENOM" id="CLU_048577_4_0_7"/>
<dbReference type="UniPathway" id="UPA00031">
    <property type="reaction ID" value="UER00010"/>
</dbReference>
<dbReference type="Proteomes" id="UP000000739">
    <property type="component" value="Chromosome"/>
</dbReference>
<dbReference type="GO" id="GO:0005737">
    <property type="term" value="C:cytoplasm"/>
    <property type="evidence" value="ECO:0007669"/>
    <property type="project" value="UniProtKB-SubCell"/>
</dbReference>
<dbReference type="GO" id="GO:0000107">
    <property type="term" value="F:imidazoleglycerol-phosphate synthase activity"/>
    <property type="evidence" value="ECO:0007669"/>
    <property type="project" value="UniProtKB-UniRule"/>
</dbReference>
<dbReference type="GO" id="GO:0016829">
    <property type="term" value="F:lyase activity"/>
    <property type="evidence" value="ECO:0007669"/>
    <property type="project" value="UniProtKB-KW"/>
</dbReference>
<dbReference type="GO" id="GO:0000105">
    <property type="term" value="P:L-histidine biosynthetic process"/>
    <property type="evidence" value="ECO:0007669"/>
    <property type="project" value="UniProtKB-UniRule"/>
</dbReference>
<dbReference type="CDD" id="cd04731">
    <property type="entry name" value="HisF"/>
    <property type="match status" value="1"/>
</dbReference>
<dbReference type="Gene3D" id="3.20.20.70">
    <property type="entry name" value="Aldolase class I"/>
    <property type="match status" value="1"/>
</dbReference>
<dbReference type="HAMAP" id="MF_01013">
    <property type="entry name" value="HisF"/>
    <property type="match status" value="1"/>
</dbReference>
<dbReference type="InterPro" id="IPR013785">
    <property type="entry name" value="Aldolase_TIM"/>
</dbReference>
<dbReference type="InterPro" id="IPR006062">
    <property type="entry name" value="His_biosynth"/>
</dbReference>
<dbReference type="InterPro" id="IPR004651">
    <property type="entry name" value="HisF"/>
</dbReference>
<dbReference type="InterPro" id="IPR050064">
    <property type="entry name" value="IGPS_HisA/HisF"/>
</dbReference>
<dbReference type="InterPro" id="IPR011060">
    <property type="entry name" value="RibuloseP-bd_barrel"/>
</dbReference>
<dbReference type="NCBIfam" id="TIGR00735">
    <property type="entry name" value="hisF"/>
    <property type="match status" value="1"/>
</dbReference>
<dbReference type="PANTHER" id="PTHR21235:SF2">
    <property type="entry name" value="IMIDAZOLE GLYCEROL PHOSPHATE SYNTHASE HISHF"/>
    <property type="match status" value="1"/>
</dbReference>
<dbReference type="PANTHER" id="PTHR21235">
    <property type="entry name" value="IMIDAZOLE GLYCEROL PHOSPHATE SYNTHASE SUBUNIT HISF/H IGP SYNTHASE SUBUNIT HISF/H"/>
    <property type="match status" value="1"/>
</dbReference>
<dbReference type="Pfam" id="PF00977">
    <property type="entry name" value="His_biosynth"/>
    <property type="match status" value="1"/>
</dbReference>
<dbReference type="SUPFAM" id="SSF51366">
    <property type="entry name" value="Ribulose-phoshate binding barrel"/>
    <property type="match status" value="1"/>
</dbReference>
<sequence>MLSKRVIVCLDVRDGKTTKGIKFKGNVDIGDPVDMARVYYEAGCDELVFYDITASHEKRGIMIDVVRRVAETIFIPFSVGGGISSVEDMRDVLLAGAEKISVNSAAVKNPKIITQGAEAFGNQCVVLGMDVKKVEKSEKIPSGYEIVINGGRTYMGIDALWWAQEGERLGAGEICLNSIDADGTKEGYELELTALISENVNIPVIASGGGGIPQHLGDVLKEGKADAALIASMVHYGTYTIPEIKDHLKSQGISVRDQLQ</sequence>
<evidence type="ECO:0000255" key="1">
    <source>
        <dbReference type="HAMAP-Rule" id="MF_01013"/>
    </source>
</evidence>
<organism>
    <name type="scientific">Desulfatibacillum aliphaticivorans</name>
    <dbReference type="NCBI Taxonomy" id="218208"/>
    <lineage>
        <taxon>Bacteria</taxon>
        <taxon>Pseudomonadati</taxon>
        <taxon>Thermodesulfobacteriota</taxon>
        <taxon>Desulfobacteria</taxon>
        <taxon>Desulfobacterales</taxon>
        <taxon>Desulfatibacillaceae</taxon>
        <taxon>Desulfatibacillum</taxon>
    </lineage>
</organism>
<protein>
    <recommendedName>
        <fullName evidence="1">Imidazole glycerol phosphate synthase subunit HisF</fullName>
        <ecNumber evidence="1">4.3.2.10</ecNumber>
    </recommendedName>
    <alternativeName>
        <fullName evidence="1">IGP synthase cyclase subunit</fullName>
    </alternativeName>
    <alternativeName>
        <fullName evidence="1">IGP synthase subunit HisF</fullName>
    </alternativeName>
    <alternativeName>
        <fullName evidence="1">ImGP synthase subunit HisF</fullName>
        <shortName evidence="1">IGPS subunit HisF</shortName>
    </alternativeName>
</protein>